<comment type="function">
    <text evidence="1">DNA-dependent RNA polymerase catalyzes the transcription of DNA into RNA using the four ribonucleoside triphosphates as substrates.</text>
</comment>
<comment type="catalytic activity">
    <reaction evidence="1">
        <text>RNA(n) + a ribonucleoside 5'-triphosphate = RNA(n+1) + diphosphate</text>
        <dbReference type="Rhea" id="RHEA:21248"/>
        <dbReference type="Rhea" id="RHEA-COMP:14527"/>
        <dbReference type="Rhea" id="RHEA-COMP:17342"/>
        <dbReference type="ChEBI" id="CHEBI:33019"/>
        <dbReference type="ChEBI" id="CHEBI:61557"/>
        <dbReference type="ChEBI" id="CHEBI:140395"/>
        <dbReference type="EC" id="2.7.7.6"/>
    </reaction>
</comment>
<comment type="cofactor">
    <cofactor evidence="1">
        <name>Mg(2+)</name>
        <dbReference type="ChEBI" id="CHEBI:18420"/>
    </cofactor>
    <text evidence="1">Binds 1 Mg(2+) ion per subunit.</text>
</comment>
<comment type="cofactor">
    <cofactor evidence="1">
        <name>Zn(2+)</name>
        <dbReference type="ChEBI" id="CHEBI:29105"/>
    </cofactor>
    <text evidence="1">Binds 2 Zn(2+) ions per subunit.</text>
</comment>
<comment type="subunit">
    <text evidence="1">The RNAP catalytic core consists of 2 alpha, 1 beta, 1 beta' and 1 omega subunit. When a sigma factor is associated with the core the holoenzyme is formed, which can initiate transcription.</text>
</comment>
<comment type="similarity">
    <text evidence="1">Belongs to the RNA polymerase beta' chain family.</text>
</comment>
<evidence type="ECO:0000255" key="1">
    <source>
        <dbReference type="HAMAP-Rule" id="MF_01322"/>
    </source>
</evidence>
<name>RPOC_RICBR</name>
<gene>
    <name evidence="1" type="primary">rpoC</name>
    <name type="ordered locus">RBE_1152</name>
</gene>
<sequence>MSVVNFYGQLSNTQQFDQIRINIASPEQVRSWSFGEVIKPETINYRTFKPEKDGLFCARIFGPVKDYECLCGKYKRMKNRGITCEKCGVEVTVSRVRRERMGHIELAAPVAHIWFLKSLPSRISTLLDMTMRDIEKILYFENYVVVDPGLSILQKGELLTEEELQKAKDKYGEDAFTASIGAEVVQQMLKELDFPTLKQELYEELQNTTSEVKKKKLVKRLKLVEDFLESENKPEWMIMNVLPVMPPELRPLVMLDGGRFATSDLNELYRRVINRNNRLKKLIESKAPDIIVRNEKRMLQEAVDALFDNGRRGRAAKNANKRPFKSLSDMLKGKQGRFRQNLLGKRVDYSGRSVIVVGPELKLHQCGLPKKMALELFKPFIYSKLELYGIATTIKAAKRMVEAEKPEVWDVLEEVIREHPVLLNRAPTLHRLGIQAFEPLLIEGKAIQLHPLVCAAFNADFDGDQMAVHIPLSIEAQLEARVFMMSTNNILSPANGRPIIVPDKDIVLGLYYLTLAFDHEVGEGMMFSDLTEMEHALYNKFITIHTKIKYRRNQLNAEGKIVPVIVDTTYGRLMVGELLPSNPNIEYKFINKPLTKKDISLVIDLVYRHCGQKATVIFADQLMKLGFKYACSSGISFGMDDMVVPKSKIVHIDETQLEIKEFEQQYSNGLITYGEKYNKVIDAWSRCTDRVANDMMKEIAKPPVSDDSNQQKINSIYMMAISGARGSFQQIKQLGGMRGLMTKSNGQIIPTPIIANFKEGLTVFECFNSANGMRKGQIDTALKTASSGYLTRKLVDVAQDCIITEKDCNTDKGIEVKSIIEGGEVIVPLAEMILGRTAAINIYHPVTNDLILTKGELINESKLEQIESAGLDRIMIKSVLTCESSTGICAICYGRDLATGSLVSEGEAIGVIAAQSIGEPGTQLTMRTFHIGGAATKGAEVSSVEASYDAKVKILSRNVVINSEERKIVMSRNCELLLLDNNGNEKAHSKIPYGARLLVDEGDMVTKTQKLAEWDPYTIPIITEKSGKVLFKDMVEGISVRDVTDEATGIPSKVIIESKQYSRGAELRPRIQLLDAKGEIIMLSNGLEARYYLPVGAVLSVEDGVQISVGDIIARIPKESTTTKDITGGLPRVAELFEARRPKDHAVIAEIDGRVEFGKDYKSKRRIIIHPVDGSMGLEYMVPKGKHVVVNEGDFVKKGDLLIDGNPVLQDILKVMGVELLASYIVKEVQAVYRLQGVKIDDKHIEVIIRQMLQKVEITDSGGTTLLVGEKIDRREFDEINEKAIKNGLRPADAQLILQGITKSSLQTRSFISAASFQETTRVLTEAAIAGKVDKLRGLKENVIVGRLVPAGTGFLYGQNA</sequence>
<proteinExistence type="inferred from homology"/>
<dbReference type="EC" id="2.7.7.6" evidence="1"/>
<dbReference type="EMBL" id="CP000087">
    <property type="protein sequence ID" value="ABE05233.1"/>
    <property type="molecule type" value="Genomic_DNA"/>
</dbReference>
<dbReference type="RefSeq" id="WP_011477811.1">
    <property type="nucleotide sequence ID" value="NC_007940.1"/>
</dbReference>
<dbReference type="SMR" id="Q1RHD1"/>
<dbReference type="KEGG" id="rbe:RBE_1152"/>
<dbReference type="eggNOG" id="COG0086">
    <property type="taxonomic scope" value="Bacteria"/>
</dbReference>
<dbReference type="HOGENOM" id="CLU_000524_3_1_5"/>
<dbReference type="OrthoDB" id="9815296at2"/>
<dbReference type="Proteomes" id="UP000001951">
    <property type="component" value="Chromosome"/>
</dbReference>
<dbReference type="GO" id="GO:0000428">
    <property type="term" value="C:DNA-directed RNA polymerase complex"/>
    <property type="evidence" value="ECO:0007669"/>
    <property type="project" value="UniProtKB-KW"/>
</dbReference>
<dbReference type="GO" id="GO:0003677">
    <property type="term" value="F:DNA binding"/>
    <property type="evidence" value="ECO:0007669"/>
    <property type="project" value="UniProtKB-UniRule"/>
</dbReference>
<dbReference type="GO" id="GO:0003899">
    <property type="term" value="F:DNA-directed RNA polymerase activity"/>
    <property type="evidence" value="ECO:0007669"/>
    <property type="project" value="UniProtKB-UniRule"/>
</dbReference>
<dbReference type="GO" id="GO:0000287">
    <property type="term" value="F:magnesium ion binding"/>
    <property type="evidence" value="ECO:0007669"/>
    <property type="project" value="UniProtKB-UniRule"/>
</dbReference>
<dbReference type="GO" id="GO:0008270">
    <property type="term" value="F:zinc ion binding"/>
    <property type="evidence" value="ECO:0007669"/>
    <property type="project" value="UniProtKB-UniRule"/>
</dbReference>
<dbReference type="GO" id="GO:0006351">
    <property type="term" value="P:DNA-templated transcription"/>
    <property type="evidence" value="ECO:0007669"/>
    <property type="project" value="UniProtKB-UniRule"/>
</dbReference>
<dbReference type="CDD" id="cd02655">
    <property type="entry name" value="RNAP_beta'_C"/>
    <property type="match status" value="1"/>
</dbReference>
<dbReference type="CDD" id="cd01609">
    <property type="entry name" value="RNAP_beta'_N"/>
    <property type="match status" value="1"/>
</dbReference>
<dbReference type="FunFam" id="1.10.150.390:FF:000002">
    <property type="entry name" value="DNA-directed RNA polymerase subunit beta"/>
    <property type="match status" value="1"/>
</dbReference>
<dbReference type="Gene3D" id="1.10.132.30">
    <property type="match status" value="1"/>
</dbReference>
<dbReference type="Gene3D" id="1.10.150.390">
    <property type="match status" value="1"/>
</dbReference>
<dbReference type="Gene3D" id="1.10.1790.20">
    <property type="match status" value="1"/>
</dbReference>
<dbReference type="Gene3D" id="1.10.40.90">
    <property type="match status" value="1"/>
</dbReference>
<dbReference type="Gene3D" id="2.40.40.20">
    <property type="match status" value="1"/>
</dbReference>
<dbReference type="Gene3D" id="2.40.50.100">
    <property type="match status" value="3"/>
</dbReference>
<dbReference type="Gene3D" id="4.10.860.120">
    <property type="entry name" value="RNA polymerase II, clamp domain"/>
    <property type="match status" value="1"/>
</dbReference>
<dbReference type="Gene3D" id="1.10.274.100">
    <property type="entry name" value="RNA polymerase Rpb1, domain 3"/>
    <property type="match status" value="1"/>
</dbReference>
<dbReference type="HAMAP" id="MF_01322">
    <property type="entry name" value="RNApol_bact_RpoC"/>
    <property type="match status" value="1"/>
</dbReference>
<dbReference type="InterPro" id="IPR045867">
    <property type="entry name" value="DNA-dir_RpoC_beta_prime"/>
</dbReference>
<dbReference type="InterPro" id="IPR012754">
    <property type="entry name" value="DNA-dir_RpoC_beta_prime_bact"/>
</dbReference>
<dbReference type="InterPro" id="IPR000722">
    <property type="entry name" value="RNA_pol_asu"/>
</dbReference>
<dbReference type="InterPro" id="IPR006592">
    <property type="entry name" value="RNA_pol_N"/>
</dbReference>
<dbReference type="InterPro" id="IPR007080">
    <property type="entry name" value="RNA_pol_Rpb1_1"/>
</dbReference>
<dbReference type="InterPro" id="IPR007066">
    <property type="entry name" value="RNA_pol_Rpb1_3"/>
</dbReference>
<dbReference type="InterPro" id="IPR042102">
    <property type="entry name" value="RNA_pol_Rpb1_3_sf"/>
</dbReference>
<dbReference type="InterPro" id="IPR007083">
    <property type="entry name" value="RNA_pol_Rpb1_4"/>
</dbReference>
<dbReference type="InterPro" id="IPR007081">
    <property type="entry name" value="RNA_pol_Rpb1_5"/>
</dbReference>
<dbReference type="InterPro" id="IPR044893">
    <property type="entry name" value="RNA_pol_Rpb1_clamp_domain"/>
</dbReference>
<dbReference type="InterPro" id="IPR038120">
    <property type="entry name" value="Rpb1_funnel_sf"/>
</dbReference>
<dbReference type="NCBIfam" id="TIGR02386">
    <property type="entry name" value="rpoC_TIGR"/>
    <property type="match status" value="1"/>
</dbReference>
<dbReference type="PANTHER" id="PTHR19376">
    <property type="entry name" value="DNA-DIRECTED RNA POLYMERASE"/>
    <property type="match status" value="1"/>
</dbReference>
<dbReference type="PANTHER" id="PTHR19376:SF54">
    <property type="entry name" value="DNA-DIRECTED RNA POLYMERASE SUBUNIT BETA"/>
    <property type="match status" value="1"/>
</dbReference>
<dbReference type="Pfam" id="PF04997">
    <property type="entry name" value="RNA_pol_Rpb1_1"/>
    <property type="match status" value="1"/>
</dbReference>
<dbReference type="Pfam" id="PF00623">
    <property type="entry name" value="RNA_pol_Rpb1_2"/>
    <property type="match status" value="2"/>
</dbReference>
<dbReference type="Pfam" id="PF04983">
    <property type="entry name" value="RNA_pol_Rpb1_3"/>
    <property type="match status" value="1"/>
</dbReference>
<dbReference type="Pfam" id="PF05000">
    <property type="entry name" value="RNA_pol_Rpb1_4"/>
    <property type="match status" value="1"/>
</dbReference>
<dbReference type="Pfam" id="PF04998">
    <property type="entry name" value="RNA_pol_Rpb1_5"/>
    <property type="match status" value="1"/>
</dbReference>
<dbReference type="SMART" id="SM00663">
    <property type="entry name" value="RPOLA_N"/>
    <property type="match status" value="1"/>
</dbReference>
<dbReference type="SUPFAM" id="SSF64484">
    <property type="entry name" value="beta and beta-prime subunits of DNA dependent RNA-polymerase"/>
    <property type="match status" value="1"/>
</dbReference>
<feature type="chain" id="PRO_0000240821" description="DNA-directed RNA polymerase subunit beta'">
    <location>
        <begin position="1"/>
        <end position="1361"/>
    </location>
</feature>
<feature type="binding site" evidence="1">
    <location>
        <position position="69"/>
    </location>
    <ligand>
        <name>Zn(2+)</name>
        <dbReference type="ChEBI" id="CHEBI:29105"/>
        <label>1</label>
    </ligand>
</feature>
<feature type="binding site" evidence="1">
    <location>
        <position position="71"/>
    </location>
    <ligand>
        <name>Zn(2+)</name>
        <dbReference type="ChEBI" id="CHEBI:29105"/>
        <label>1</label>
    </ligand>
</feature>
<feature type="binding site" evidence="1">
    <location>
        <position position="84"/>
    </location>
    <ligand>
        <name>Zn(2+)</name>
        <dbReference type="ChEBI" id="CHEBI:29105"/>
        <label>1</label>
    </ligand>
</feature>
<feature type="binding site" evidence="1">
    <location>
        <position position="87"/>
    </location>
    <ligand>
        <name>Zn(2+)</name>
        <dbReference type="ChEBI" id="CHEBI:29105"/>
        <label>1</label>
    </ligand>
</feature>
<feature type="binding site" evidence="1">
    <location>
        <position position="460"/>
    </location>
    <ligand>
        <name>Mg(2+)</name>
        <dbReference type="ChEBI" id="CHEBI:18420"/>
    </ligand>
</feature>
<feature type="binding site" evidence="1">
    <location>
        <position position="462"/>
    </location>
    <ligand>
        <name>Mg(2+)</name>
        <dbReference type="ChEBI" id="CHEBI:18420"/>
    </ligand>
</feature>
<feature type="binding site" evidence="1">
    <location>
        <position position="464"/>
    </location>
    <ligand>
        <name>Mg(2+)</name>
        <dbReference type="ChEBI" id="CHEBI:18420"/>
    </ligand>
</feature>
<feature type="binding site" evidence="1">
    <location>
        <position position="808"/>
    </location>
    <ligand>
        <name>Zn(2+)</name>
        <dbReference type="ChEBI" id="CHEBI:29105"/>
        <label>2</label>
    </ligand>
</feature>
<feature type="binding site" evidence="1">
    <location>
        <position position="882"/>
    </location>
    <ligand>
        <name>Zn(2+)</name>
        <dbReference type="ChEBI" id="CHEBI:29105"/>
        <label>2</label>
    </ligand>
</feature>
<feature type="binding site" evidence="1">
    <location>
        <position position="889"/>
    </location>
    <ligand>
        <name>Zn(2+)</name>
        <dbReference type="ChEBI" id="CHEBI:29105"/>
        <label>2</label>
    </ligand>
</feature>
<feature type="binding site" evidence="1">
    <location>
        <position position="892"/>
    </location>
    <ligand>
        <name>Zn(2+)</name>
        <dbReference type="ChEBI" id="CHEBI:29105"/>
        <label>2</label>
    </ligand>
</feature>
<protein>
    <recommendedName>
        <fullName evidence="1">DNA-directed RNA polymerase subunit beta'</fullName>
        <shortName evidence="1">RNAP subunit beta'</shortName>
        <ecNumber evidence="1">2.7.7.6</ecNumber>
    </recommendedName>
    <alternativeName>
        <fullName evidence="1">RNA polymerase subunit beta'</fullName>
    </alternativeName>
    <alternativeName>
        <fullName evidence="1">Transcriptase subunit beta'</fullName>
    </alternativeName>
</protein>
<accession>Q1RHD1</accession>
<organism>
    <name type="scientific">Rickettsia bellii (strain RML369-C)</name>
    <dbReference type="NCBI Taxonomy" id="336407"/>
    <lineage>
        <taxon>Bacteria</taxon>
        <taxon>Pseudomonadati</taxon>
        <taxon>Pseudomonadota</taxon>
        <taxon>Alphaproteobacteria</taxon>
        <taxon>Rickettsiales</taxon>
        <taxon>Rickettsiaceae</taxon>
        <taxon>Rickettsieae</taxon>
        <taxon>Rickettsia</taxon>
        <taxon>belli group</taxon>
    </lineage>
</organism>
<keyword id="KW-0240">DNA-directed RNA polymerase</keyword>
<keyword id="KW-0460">Magnesium</keyword>
<keyword id="KW-0479">Metal-binding</keyword>
<keyword id="KW-0548">Nucleotidyltransferase</keyword>
<keyword id="KW-0804">Transcription</keyword>
<keyword id="KW-0808">Transferase</keyword>
<keyword id="KW-0862">Zinc</keyword>
<reference key="1">
    <citation type="journal article" date="2006" name="PLoS Genet.">
        <title>Genome sequence of Rickettsia bellii illuminates the role of amoebae in gene exchanges between intracellular pathogens.</title>
        <authorList>
            <person name="Ogata H."/>
            <person name="La Scola B."/>
            <person name="Audic S."/>
            <person name="Renesto P."/>
            <person name="Blanc G."/>
            <person name="Robert C."/>
            <person name="Fournier P.-E."/>
            <person name="Claverie J.-M."/>
            <person name="Raoult D."/>
        </authorList>
    </citation>
    <scope>NUCLEOTIDE SEQUENCE [LARGE SCALE GENOMIC DNA]</scope>
    <source>
        <strain>RML369-C</strain>
    </source>
</reference>